<reference evidence="10" key="1">
    <citation type="journal article" date="2000" name="Science">
        <title>The genome sequence of Drosophila melanogaster.</title>
        <authorList>
            <person name="Adams M.D."/>
            <person name="Celniker S.E."/>
            <person name="Holt R.A."/>
            <person name="Evans C.A."/>
            <person name="Gocayne J.D."/>
            <person name="Amanatides P.G."/>
            <person name="Scherer S.E."/>
            <person name="Li P.W."/>
            <person name="Hoskins R.A."/>
            <person name="Galle R.F."/>
            <person name="George R.A."/>
            <person name="Lewis S.E."/>
            <person name="Richards S."/>
            <person name="Ashburner M."/>
            <person name="Henderson S.N."/>
            <person name="Sutton G.G."/>
            <person name="Wortman J.R."/>
            <person name="Yandell M.D."/>
            <person name="Zhang Q."/>
            <person name="Chen L.X."/>
            <person name="Brandon R.C."/>
            <person name="Rogers Y.-H.C."/>
            <person name="Blazej R.G."/>
            <person name="Champe M."/>
            <person name="Pfeiffer B.D."/>
            <person name="Wan K.H."/>
            <person name="Doyle C."/>
            <person name="Baxter E.G."/>
            <person name="Helt G."/>
            <person name="Nelson C.R."/>
            <person name="Miklos G.L.G."/>
            <person name="Abril J.F."/>
            <person name="Agbayani A."/>
            <person name="An H.-J."/>
            <person name="Andrews-Pfannkoch C."/>
            <person name="Baldwin D."/>
            <person name="Ballew R.M."/>
            <person name="Basu A."/>
            <person name="Baxendale J."/>
            <person name="Bayraktaroglu L."/>
            <person name="Beasley E.M."/>
            <person name="Beeson K.Y."/>
            <person name="Benos P.V."/>
            <person name="Berman B.P."/>
            <person name="Bhandari D."/>
            <person name="Bolshakov S."/>
            <person name="Borkova D."/>
            <person name="Botchan M.R."/>
            <person name="Bouck J."/>
            <person name="Brokstein P."/>
            <person name="Brottier P."/>
            <person name="Burtis K.C."/>
            <person name="Busam D.A."/>
            <person name="Butler H."/>
            <person name="Cadieu E."/>
            <person name="Center A."/>
            <person name="Chandra I."/>
            <person name="Cherry J.M."/>
            <person name="Cawley S."/>
            <person name="Dahlke C."/>
            <person name="Davenport L.B."/>
            <person name="Davies P."/>
            <person name="de Pablos B."/>
            <person name="Delcher A."/>
            <person name="Deng Z."/>
            <person name="Mays A.D."/>
            <person name="Dew I."/>
            <person name="Dietz S.M."/>
            <person name="Dodson K."/>
            <person name="Doup L.E."/>
            <person name="Downes M."/>
            <person name="Dugan-Rocha S."/>
            <person name="Dunkov B.C."/>
            <person name="Dunn P."/>
            <person name="Durbin K.J."/>
            <person name="Evangelista C.C."/>
            <person name="Ferraz C."/>
            <person name="Ferriera S."/>
            <person name="Fleischmann W."/>
            <person name="Fosler C."/>
            <person name="Gabrielian A.E."/>
            <person name="Garg N.S."/>
            <person name="Gelbart W.M."/>
            <person name="Glasser K."/>
            <person name="Glodek A."/>
            <person name="Gong F."/>
            <person name="Gorrell J.H."/>
            <person name="Gu Z."/>
            <person name="Guan P."/>
            <person name="Harris M."/>
            <person name="Harris N.L."/>
            <person name="Harvey D.A."/>
            <person name="Heiman T.J."/>
            <person name="Hernandez J.R."/>
            <person name="Houck J."/>
            <person name="Hostin D."/>
            <person name="Houston K.A."/>
            <person name="Howland T.J."/>
            <person name="Wei M.-H."/>
            <person name="Ibegwam C."/>
            <person name="Jalali M."/>
            <person name="Kalush F."/>
            <person name="Karpen G.H."/>
            <person name="Ke Z."/>
            <person name="Kennison J.A."/>
            <person name="Ketchum K.A."/>
            <person name="Kimmel B.E."/>
            <person name="Kodira C.D."/>
            <person name="Kraft C.L."/>
            <person name="Kravitz S."/>
            <person name="Kulp D."/>
            <person name="Lai Z."/>
            <person name="Lasko P."/>
            <person name="Lei Y."/>
            <person name="Levitsky A.A."/>
            <person name="Li J.H."/>
            <person name="Li Z."/>
            <person name="Liang Y."/>
            <person name="Lin X."/>
            <person name="Liu X."/>
            <person name="Mattei B."/>
            <person name="McIntosh T.C."/>
            <person name="McLeod M.P."/>
            <person name="McPherson D."/>
            <person name="Merkulov G."/>
            <person name="Milshina N.V."/>
            <person name="Mobarry C."/>
            <person name="Morris J."/>
            <person name="Moshrefi A."/>
            <person name="Mount S.M."/>
            <person name="Moy M."/>
            <person name="Murphy B."/>
            <person name="Murphy L."/>
            <person name="Muzny D.M."/>
            <person name="Nelson D.L."/>
            <person name="Nelson D.R."/>
            <person name="Nelson K.A."/>
            <person name="Nixon K."/>
            <person name="Nusskern D.R."/>
            <person name="Pacleb J.M."/>
            <person name="Palazzolo M."/>
            <person name="Pittman G.S."/>
            <person name="Pan S."/>
            <person name="Pollard J."/>
            <person name="Puri V."/>
            <person name="Reese M.G."/>
            <person name="Reinert K."/>
            <person name="Remington K."/>
            <person name="Saunders R.D.C."/>
            <person name="Scheeler F."/>
            <person name="Shen H."/>
            <person name="Shue B.C."/>
            <person name="Siden-Kiamos I."/>
            <person name="Simpson M."/>
            <person name="Skupski M.P."/>
            <person name="Smith T.J."/>
            <person name="Spier E."/>
            <person name="Spradling A.C."/>
            <person name="Stapleton M."/>
            <person name="Strong R."/>
            <person name="Sun E."/>
            <person name="Svirskas R."/>
            <person name="Tector C."/>
            <person name="Turner R."/>
            <person name="Venter E."/>
            <person name="Wang A.H."/>
            <person name="Wang X."/>
            <person name="Wang Z.-Y."/>
            <person name="Wassarman D.A."/>
            <person name="Weinstock G.M."/>
            <person name="Weissenbach J."/>
            <person name="Williams S.M."/>
            <person name="Woodage T."/>
            <person name="Worley K.C."/>
            <person name="Wu D."/>
            <person name="Yang S."/>
            <person name="Yao Q.A."/>
            <person name="Ye J."/>
            <person name="Yeh R.-F."/>
            <person name="Zaveri J.S."/>
            <person name="Zhan M."/>
            <person name="Zhang G."/>
            <person name="Zhao Q."/>
            <person name="Zheng L."/>
            <person name="Zheng X.H."/>
            <person name="Zhong F.N."/>
            <person name="Zhong W."/>
            <person name="Zhou X."/>
            <person name="Zhu S.C."/>
            <person name="Zhu X."/>
            <person name="Smith H.O."/>
            <person name="Gibbs R.A."/>
            <person name="Myers E.W."/>
            <person name="Rubin G.M."/>
            <person name="Venter J.C."/>
        </authorList>
    </citation>
    <scope>NUCLEOTIDE SEQUENCE [LARGE SCALE GENOMIC DNA]</scope>
    <source>
        <strain evidence="10">Berkeley</strain>
    </source>
</reference>
<reference evidence="10" key="2">
    <citation type="journal article" date="2002" name="Genome Biol.">
        <title>Annotation of the Drosophila melanogaster euchromatic genome: a systematic review.</title>
        <authorList>
            <person name="Misra S."/>
            <person name="Crosby M.A."/>
            <person name="Mungall C.J."/>
            <person name="Matthews B.B."/>
            <person name="Campbell K.S."/>
            <person name="Hradecky P."/>
            <person name="Huang Y."/>
            <person name="Kaminker J.S."/>
            <person name="Millburn G.H."/>
            <person name="Prochnik S.E."/>
            <person name="Smith C.D."/>
            <person name="Tupy J.L."/>
            <person name="Whitfield E.J."/>
            <person name="Bayraktaroglu L."/>
            <person name="Berman B.P."/>
            <person name="Bettencourt B.R."/>
            <person name="Celniker S.E."/>
            <person name="de Grey A.D.N.J."/>
            <person name="Drysdale R.A."/>
            <person name="Harris N.L."/>
            <person name="Richter J."/>
            <person name="Russo S."/>
            <person name="Schroeder A.J."/>
            <person name="Shu S.Q."/>
            <person name="Stapleton M."/>
            <person name="Yamada C."/>
            <person name="Ashburner M."/>
            <person name="Gelbart W.M."/>
            <person name="Rubin G.M."/>
            <person name="Lewis S.E."/>
        </authorList>
    </citation>
    <scope>GENOME REANNOTATION</scope>
    <source>
        <strain evidence="10">Berkeley</strain>
    </source>
</reference>
<reference evidence="7" key="3">
    <citation type="journal article" date="2002" name="Genome Biol.">
        <title>A Drosophila full-length cDNA resource.</title>
        <authorList>
            <person name="Stapleton M."/>
            <person name="Carlson J.W."/>
            <person name="Brokstein P."/>
            <person name="Yu C."/>
            <person name="Champe M."/>
            <person name="George R.A."/>
            <person name="Guarin H."/>
            <person name="Kronmiller B."/>
            <person name="Pacleb J.M."/>
            <person name="Park S."/>
            <person name="Wan K.H."/>
            <person name="Rubin G.M."/>
            <person name="Celniker S.E."/>
        </authorList>
    </citation>
    <scope>NUCLEOTIDE SEQUENCE [LARGE SCALE MRNA]</scope>
    <source>
        <strain evidence="7">Berkeley</strain>
        <tissue evidence="7">Larva</tissue>
        <tissue evidence="7">Pupae</tissue>
    </source>
</reference>
<reference evidence="8" key="4">
    <citation type="submission" date="2010-04" db="EMBL/GenBank/DDBJ databases">
        <authorList>
            <person name="Carlson J."/>
            <person name="Booth B."/>
            <person name="Frise E."/>
            <person name="Sandler J."/>
            <person name="Wan K."/>
            <person name="Yu C."/>
            <person name="Celniker S."/>
        </authorList>
    </citation>
    <scope>NUCLEOTIDE SEQUENCE [LARGE SCALE MRNA] OF 18-162</scope>
</reference>
<reference evidence="5" key="5">
    <citation type="journal article" date="2012" name="J. Cell Sci.">
        <title>Snakeskin, a membrane protein associated with smooth septate junctions, is required for intestinal barrier function in Drosophila.</title>
        <authorList>
            <person name="Yanagihashi Y."/>
            <person name="Usui T."/>
            <person name="Izumi Y."/>
            <person name="Yonemura S."/>
            <person name="Sumida M."/>
            <person name="Tsukita S."/>
            <person name="Uemura T."/>
            <person name="Furuse M."/>
        </authorList>
    </citation>
    <scope>FUNCTION</scope>
    <scope>SUBCELLULAR LOCATION</scope>
    <scope>DEVELOPMENTAL STAGE</scope>
    <scope>TOPOLOGY</scope>
</reference>
<reference evidence="5" key="6">
    <citation type="journal article" date="2012" name="J. Cell Sci.">
        <title>A novel protein complex, Mesh-Ssk, is required for septate junction formation in the Drosophila midgut.</title>
        <authorList>
            <person name="Izumi Y."/>
            <person name="Yanagihashi Y."/>
            <person name="Furuse M."/>
        </authorList>
    </citation>
    <scope>FUNCTION</scope>
    <scope>INTERACTION WITH MESH</scope>
    <scope>SUBCELLULAR LOCATION</scope>
    <scope>DEVELOPMENTAL STAGE</scope>
</reference>
<reference evidence="5" key="7">
    <citation type="journal article" date="2016" name="J. Cell Sci.">
        <title>A tetraspanin regulates septate junction formation in Drosophila midgut.</title>
        <authorList>
            <person name="Izumi Y."/>
            <person name="Motoishi M."/>
            <person name="Furuse K."/>
            <person name="Furuse M."/>
        </authorList>
    </citation>
    <scope>FUNCTION</scope>
    <scope>IDENTIFICATION IN A COMPLEX WITH TSP2A AND MESH</scope>
    <scope>SUBCELLULAR LOCATION</scope>
    <scope>DEVELOPMENTAL STAGE</scope>
</reference>
<keyword id="KW-0965">Cell junction</keyword>
<keyword id="KW-1003">Cell membrane</keyword>
<keyword id="KW-0472">Membrane</keyword>
<keyword id="KW-1185">Reference proteome</keyword>
<keyword id="KW-0812">Transmembrane</keyword>
<keyword id="KW-1133">Transmembrane helix</keyword>
<accession>Q9VW87</accession>
<accession>D5A7R8</accession>
<organism evidence="10">
    <name type="scientific">Drosophila melanogaster</name>
    <name type="common">Fruit fly</name>
    <dbReference type="NCBI Taxonomy" id="7227"/>
    <lineage>
        <taxon>Eukaryota</taxon>
        <taxon>Metazoa</taxon>
        <taxon>Ecdysozoa</taxon>
        <taxon>Arthropoda</taxon>
        <taxon>Hexapoda</taxon>
        <taxon>Insecta</taxon>
        <taxon>Pterygota</taxon>
        <taxon>Neoptera</taxon>
        <taxon>Endopterygota</taxon>
        <taxon>Diptera</taxon>
        <taxon>Brachycera</taxon>
        <taxon>Muscomorpha</taxon>
        <taxon>Ephydroidea</taxon>
        <taxon>Drosophilidae</taxon>
        <taxon>Drosophila</taxon>
        <taxon>Sophophora</taxon>
    </lineage>
</organism>
<name>SSK_DROME</name>
<evidence type="ECO:0000255" key="1"/>
<evidence type="ECO:0000269" key="2">
    <source>
    </source>
</evidence>
<evidence type="ECO:0000269" key="3">
    <source>
    </source>
</evidence>
<evidence type="ECO:0000269" key="4">
    <source>
    </source>
</evidence>
<evidence type="ECO:0000305" key="5"/>
<evidence type="ECO:0000305" key="6">
    <source>
    </source>
</evidence>
<evidence type="ECO:0000312" key="7">
    <source>
        <dbReference type="EMBL" id="AAK93461.1"/>
    </source>
</evidence>
<evidence type="ECO:0000312" key="8">
    <source>
        <dbReference type="EMBL" id="ADE60669.1"/>
    </source>
</evidence>
<evidence type="ECO:0000312" key="9">
    <source>
        <dbReference type="FlyBase" id="FBgn0036945"/>
    </source>
</evidence>
<evidence type="ECO:0000312" key="10">
    <source>
        <dbReference type="Proteomes" id="UP000000803"/>
    </source>
</evidence>
<comment type="function">
    <text evidence="2">Required for assembly of smooth septate junctions (sSJs), together with mesh and Tsp2A (PubMed:22854041, PubMed:26848177). May be important for barrier function of the midgut epithelium.</text>
</comment>
<comment type="subunit">
    <text evidence="3 4">Forms a complex with Tsp2A and mesh (PubMed:26848177). Interacts with mesh; the interaction may be necessary for the localization of both proteins to the cell apicolateral region (PubMed:22854041).</text>
</comment>
<comment type="subcellular location">
    <subcellularLocation>
        <location evidence="2 3 4">Apicolateral cell membrane</location>
        <topology evidence="1">Multi-pass membrane protein</topology>
    </subcellularLocation>
    <subcellularLocation>
        <location evidence="2 3 4">Cell junction</location>
        <location evidence="2 3 4">Septate junction</location>
    </subcellularLocation>
    <text evidence="2">Specific to smooth septate junctions.</text>
</comment>
<comment type="developmental stage">
    <text evidence="2 3 4">Detected from embryonic stage 12 onwards in midgut and Malpighian tubules (at protein level) (PubMed:22328496, PubMed:22854041, PubMed:26848177). Also detected in the outer epithelial layer of the proventriculus in first instar larvae (at protein level) (PubMed:22854041).</text>
</comment>
<comment type="sequence caution" evidence="5">
    <conflict type="miscellaneous discrepancy">
        <sequence resource="EMBL-CDS" id="ADE60669"/>
    </conflict>
    <text>Unlikely isoform.</text>
</comment>
<gene>
    <name evidence="9" type="primary">Ssk</name>
    <name evidence="9" type="ORF">CG6981</name>
</gene>
<sequence>MVSVETVGSIFIKALKLIINLVIIFLYRWGDGGEFLGIGGTWNLNEEKSADAEIVASGVMVGFLIYTGCHTIAFAFGTTKHKGELCDTIMNVVGCIMWIAVGGVALHYWKGYMSDEGFLYVNSERQVGIAMGSLCVIEGALYLLDTVLACIHYSKGDTDYTQ</sequence>
<feature type="chain" id="PRO_0000437457" description="Protein snakeskin">
    <location>
        <begin position="1"/>
        <end position="162"/>
    </location>
</feature>
<feature type="topological domain" description="Cytoplasmic" evidence="6">
    <location>
        <begin position="2"/>
        <end position="6"/>
    </location>
</feature>
<feature type="transmembrane region" description="Helical" evidence="1">
    <location>
        <begin position="7"/>
        <end position="27"/>
    </location>
</feature>
<feature type="topological domain" description="Extracellular" evidence="6">
    <location>
        <begin position="28"/>
        <end position="53"/>
    </location>
</feature>
<feature type="transmembrane region" description="Helical" evidence="1">
    <location>
        <begin position="54"/>
        <end position="74"/>
    </location>
</feature>
<feature type="topological domain" description="Cytoplasmic" evidence="6">
    <location>
        <begin position="75"/>
        <end position="88"/>
    </location>
</feature>
<feature type="transmembrane region" description="Helical" evidence="1">
    <location>
        <begin position="89"/>
        <end position="109"/>
    </location>
</feature>
<feature type="topological domain" description="Extracellular" evidence="6">
    <location>
        <begin position="110"/>
        <end position="128"/>
    </location>
</feature>
<feature type="transmembrane region" description="Helical" evidence="1">
    <location>
        <begin position="129"/>
        <end position="149"/>
    </location>
</feature>
<feature type="topological domain" description="Cytoplasmic" evidence="2">
    <location>
        <begin position="150"/>
        <end position="162"/>
    </location>
</feature>
<feature type="sequence conflict" description="In Ref. 4; ADE60669." evidence="5" ref="4">
    <original>T</original>
    <variation>A</variation>
    <location>
        <position position="41"/>
    </location>
</feature>
<dbReference type="EMBL" id="AE014296">
    <property type="protein sequence ID" value="AAF49062.1"/>
    <property type="molecule type" value="Genomic_DNA"/>
</dbReference>
<dbReference type="EMBL" id="AE014296">
    <property type="protein sequence ID" value="AAG22313.1"/>
    <property type="molecule type" value="Genomic_DNA"/>
</dbReference>
<dbReference type="EMBL" id="AY052037">
    <property type="protein sequence ID" value="AAK93461.1"/>
    <property type="molecule type" value="mRNA"/>
</dbReference>
<dbReference type="EMBL" id="BT122195">
    <property type="protein sequence ID" value="ADE60669.1"/>
    <property type="status" value="ALT_SEQ"/>
    <property type="molecule type" value="mRNA"/>
</dbReference>
<dbReference type="RefSeq" id="NP_649184.1">
    <property type="nucleotide sequence ID" value="NM_140927.5"/>
</dbReference>
<dbReference type="RefSeq" id="NP_730487.1">
    <property type="nucleotide sequence ID" value="NM_168831.3"/>
</dbReference>
<dbReference type="FunCoup" id="Q9VW87">
    <property type="interactions" value="8"/>
</dbReference>
<dbReference type="IntAct" id="Q9VW87">
    <property type="interactions" value="11"/>
</dbReference>
<dbReference type="STRING" id="7227.FBpp0074589"/>
<dbReference type="SwissPalm" id="Q9VW87"/>
<dbReference type="PaxDb" id="7227-FBpp0074589"/>
<dbReference type="DNASU" id="40207"/>
<dbReference type="EnsemblMetazoa" id="FBtr0074820">
    <property type="protein sequence ID" value="FBpp0074589"/>
    <property type="gene ID" value="FBgn0036945"/>
</dbReference>
<dbReference type="EnsemblMetazoa" id="FBtr0074821">
    <property type="protein sequence ID" value="FBpp0074590"/>
    <property type="gene ID" value="FBgn0036945"/>
</dbReference>
<dbReference type="GeneID" id="40207"/>
<dbReference type="KEGG" id="dme:Dmel_CG6981"/>
<dbReference type="UCSC" id="CG6981-RA">
    <property type="organism name" value="d. melanogaster"/>
</dbReference>
<dbReference type="AGR" id="FB:FBgn0036945"/>
<dbReference type="CTD" id="40207"/>
<dbReference type="FlyBase" id="FBgn0036945">
    <property type="gene designation" value="Ssk"/>
</dbReference>
<dbReference type="VEuPathDB" id="VectorBase:FBgn0036945"/>
<dbReference type="eggNOG" id="ENOG502RZZJ">
    <property type="taxonomic scope" value="Eukaryota"/>
</dbReference>
<dbReference type="HOGENOM" id="CLU_130085_0_0_1"/>
<dbReference type="InParanoid" id="Q9VW87"/>
<dbReference type="OMA" id="TWNLNED"/>
<dbReference type="OrthoDB" id="6592556at2759"/>
<dbReference type="PhylomeDB" id="Q9VW87"/>
<dbReference type="BioGRID-ORCS" id="40207">
    <property type="hits" value="0 hits in 1 CRISPR screen"/>
</dbReference>
<dbReference type="ChiTaRS" id="Ssk">
    <property type="organism name" value="fly"/>
</dbReference>
<dbReference type="GenomeRNAi" id="40207"/>
<dbReference type="PRO" id="PR:Q9VW87"/>
<dbReference type="Proteomes" id="UP000000803">
    <property type="component" value="Chromosome 3L"/>
</dbReference>
<dbReference type="Bgee" id="FBgn0036945">
    <property type="expression patterns" value="Expressed in adult posterior midgut class II enteroendocrine cell in adult midgut (Drosophila) and 82 other cell types or tissues"/>
</dbReference>
<dbReference type="ExpressionAtlas" id="Q9VW87">
    <property type="expression patterns" value="baseline and differential"/>
</dbReference>
<dbReference type="GO" id="GO:0016327">
    <property type="term" value="C:apicolateral plasma membrane"/>
    <property type="evidence" value="ECO:0000314"/>
    <property type="project" value="FlyBase"/>
</dbReference>
<dbReference type="GO" id="GO:0005886">
    <property type="term" value="C:plasma membrane"/>
    <property type="evidence" value="ECO:0000314"/>
    <property type="project" value="FlyBase"/>
</dbReference>
<dbReference type="GO" id="GO:0005920">
    <property type="term" value="C:smooth septate junction"/>
    <property type="evidence" value="ECO:0000314"/>
    <property type="project" value="FlyBase"/>
</dbReference>
<dbReference type="GO" id="GO:0007496">
    <property type="term" value="P:anterior midgut development"/>
    <property type="evidence" value="ECO:0000315"/>
    <property type="project" value="FlyBase"/>
</dbReference>
<dbReference type="GO" id="GO:0019991">
    <property type="term" value="P:septate junction assembly"/>
    <property type="evidence" value="ECO:0000315"/>
    <property type="project" value="FlyBase"/>
</dbReference>
<dbReference type="InterPro" id="IPR038976">
    <property type="entry name" value="Ssk"/>
</dbReference>
<dbReference type="PANTHER" id="PTHR36692">
    <property type="entry name" value="PROTEIN SNAKESKIN"/>
    <property type="match status" value="1"/>
</dbReference>
<dbReference type="PANTHER" id="PTHR36692:SF3">
    <property type="entry name" value="PROTEIN SNAKESKIN"/>
    <property type="match status" value="1"/>
</dbReference>
<protein>
    <recommendedName>
        <fullName evidence="5">Protein snakeskin</fullName>
    </recommendedName>
</protein>
<proteinExistence type="evidence at protein level"/>